<feature type="chain" id="PRO_0000223745" description="Acetyl-coenzyme A carboxylase carboxyl transferase subunit alpha">
    <location>
        <begin position="1"/>
        <end position="323"/>
    </location>
</feature>
<feature type="domain" description="CoA carboxyltransferase C-terminal" evidence="2">
    <location>
        <begin position="39"/>
        <end position="293"/>
    </location>
</feature>
<comment type="function">
    <text evidence="1">Component of the acetyl coenzyme A carboxylase (ACC) complex. First, biotin carboxylase catalyzes the carboxylation of biotin on its carrier protein (BCCP) and then the CO(2) group is transferred by the carboxyltransferase to acetyl-CoA to form malonyl-CoA.</text>
</comment>
<comment type="catalytic activity">
    <reaction evidence="1">
        <text>N(6)-carboxybiotinyl-L-lysyl-[protein] + acetyl-CoA = N(6)-biotinyl-L-lysyl-[protein] + malonyl-CoA</text>
        <dbReference type="Rhea" id="RHEA:54728"/>
        <dbReference type="Rhea" id="RHEA-COMP:10505"/>
        <dbReference type="Rhea" id="RHEA-COMP:10506"/>
        <dbReference type="ChEBI" id="CHEBI:57288"/>
        <dbReference type="ChEBI" id="CHEBI:57384"/>
        <dbReference type="ChEBI" id="CHEBI:83144"/>
        <dbReference type="ChEBI" id="CHEBI:83145"/>
        <dbReference type="EC" id="2.1.3.15"/>
    </reaction>
</comment>
<comment type="pathway">
    <text evidence="1">Lipid metabolism; malonyl-CoA biosynthesis; malonyl-CoA from acetyl-CoA: step 1/1.</text>
</comment>
<comment type="subunit">
    <text evidence="1">Acetyl-CoA carboxylase is a heterohexamer composed of biotin carboxyl carrier protein (AccB), biotin carboxylase (AccC) and two subunits each of ACCase subunit alpha (AccA) and ACCase subunit beta (AccD).</text>
</comment>
<comment type="subcellular location">
    <subcellularLocation>
        <location evidence="1">Cytoplasm</location>
    </subcellularLocation>
</comment>
<comment type="similarity">
    <text evidence="1">Belongs to the AccA family.</text>
</comment>
<dbReference type="EC" id="2.1.3.15" evidence="1"/>
<dbReference type="EMBL" id="CP000010">
    <property type="protein sequence ID" value="AAU47771.1"/>
    <property type="molecule type" value="Genomic_DNA"/>
</dbReference>
<dbReference type="RefSeq" id="WP_004193249.1">
    <property type="nucleotide sequence ID" value="NC_006348.1"/>
</dbReference>
<dbReference type="RefSeq" id="YP_103280.1">
    <property type="nucleotide sequence ID" value="NC_006348.1"/>
</dbReference>
<dbReference type="SMR" id="Q62J39"/>
<dbReference type="KEGG" id="bma:BMA1654"/>
<dbReference type="PATRIC" id="fig|243160.12.peg.1694"/>
<dbReference type="eggNOG" id="COG0825">
    <property type="taxonomic scope" value="Bacteria"/>
</dbReference>
<dbReference type="HOGENOM" id="CLU_015486_0_2_4"/>
<dbReference type="UniPathway" id="UPA00655">
    <property type="reaction ID" value="UER00711"/>
</dbReference>
<dbReference type="Proteomes" id="UP000006693">
    <property type="component" value="Chromosome 1"/>
</dbReference>
<dbReference type="GO" id="GO:0009317">
    <property type="term" value="C:acetyl-CoA carboxylase complex"/>
    <property type="evidence" value="ECO:0007669"/>
    <property type="project" value="InterPro"/>
</dbReference>
<dbReference type="GO" id="GO:0003989">
    <property type="term" value="F:acetyl-CoA carboxylase activity"/>
    <property type="evidence" value="ECO:0007669"/>
    <property type="project" value="InterPro"/>
</dbReference>
<dbReference type="GO" id="GO:0005524">
    <property type="term" value="F:ATP binding"/>
    <property type="evidence" value="ECO:0007669"/>
    <property type="project" value="UniProtKB-KW"/>
</dbReference>
<dbReference type="GO" id="GO:0016743">
    <property type="term" value="F:carboxyl- or carbamoyltransferase activity"/>
    <property type="evidence" value="ECO:0007669"/>
    <property type="project" value="UniProtKB-UniRule"/>
</dbReference>
<dbReference type="GO" id="GO:0006633">
    <property type="term" value="P:fatty acid biosynthetic process"/>
    <property type="evidence" value="ECO:0007669"/>
    <property type="project" value="UniProtKB-KW"/>
</dbReference>
<dbReference type="GO" id="GO:2001295">
    <property type="term" value="P:malonyl-CoA biosynthetic process"/>
    <property type="evidence" value="ECO:0007669"/>
    <property type="project" value="UniProtKB-UniRule"/>
</dbReference>
<dbReference type="Gene3D" id="3.90.226.10">
    <property type="entry name" value="2-enoyl-CoA Hydratase, Chain A, domain 1"/>
    <property type="match status" value="1"/>
</dbReference>
<dbReference type="HAMAP" id="MF_00823">
    <property type="entry name" value="AcetylCoA_CT_alpha"/>
    <property type="match status" value="1"/>
</dbReference>
<dbReference type="InterPro" id="IPR001095">
    <property type="entry name" value="Acetyl_CoA_COase_a_su"/>
</dbReference>
<dbReference type="InterPro" id="IPR029045">
    <property type="entry name" value="ClpP/crotonase-like_dom_sf"/>
</dbReference>
<dbReference type="InterPro" id="IPR011763">
    <property type="entry name" value="COA_CT_C"/>
</dbReference>
<dbReference type="NCBIfam" id="TIGR00513">
    <property type="entry name" value="accA"/>
    <property type="match status" value="1"/>
</dbReference>
<dbReference type="NCBIfam" id="NF041504">
    <property type="entry name" value="AccA_sub"/>
    <property type="match status" value="1"/>
</dbReference>
<dbReference type="NCBIfam" id="NF004344">
    <property type="entry name" value="PRK05724.1"/>
    <property type="match status" value="1"/>
</dbReference>
<dbReference type="PANTHER" id="PTHR42853">
    <property type="entry name" value="ACETYL-COENZYME A CARBOXYLASE CARBOXYL TRANSFERASE SUBUNIT ALPHA"/>
    <property type="match status" value="1"/>
</dbReference>
<dbReference type="PANTHER" id="PTHR42853:SF3">
    <property type="entry name" value="ACETYL-COENZYME A CARBOXYLASE CARBOXYL TRANSFERASE SUBUNIT ALPHA, CHLOROPLASTIC"/>
    <property type="match status" value="1"/>
</dbReference>
<dbReference type="Pfam" id="PF03255">
    <property type="entry name" value="ACCA"/>
    <property type="match status" value="1"/>
</dbReference>
<dbReference type="PRINTS" id="PR01069">
    <property type="entry name" value="ACCCTRFRASEA"/>
</dbReference>
<dbReference type="SUPFAM" id="SSF52096">
    <property type="entry name" value="ClpP/crotonase"/>
    <property type="match status" value="1"/>
</dbReference>
<dbReference type="PROSITE" id="PS50989">
    <property type="entry name" value="COA_CT_CTER"/>
    <property type="match status" value="1"/>
</dbReference>
<organism>
    <name type="scientific">Burkholderia mallei (strain ATCC 23344)</name>
    <dbReference type="NCBI Taxonomy" id="243160"/>
    <lineage>
        <taxon>Bacteria</taxon>
        <taxon>Pseudomonadati</taxon>
        <taxon>Pseudomonadota</taxon>
        <taxon>Betaproteobacteria</taxon>
        <taxon>Burkholderiales</taxon>
        <taxon>Burkholderiaceae</taxon>
        <taxon>Burkholderia</taxon>
        <taxon>pseudomallei group</taxon>
    </lineage>
</organism>
<reference key="1">
    <citation type="journal article" date="2004" name="Proc. Natl. Acad. Sci. U.S.A.">
        <title>Structural flexibility in the Burkholderia mallei genome.</title>
        <authorList>
            <person name="Nierman W.C."/>
            <person name="DeShazer D."/>
            <person name="Kim H.S."/>
            <person name="Tettelin H."/>
            <person name="Nelson K.E."/>
            <person name="Feldblyum T.V."/>
            <person name="Ulrich R.L."/>
            <person name="Ronning C.M."/>
            <person name="Brinkac L.M."/>
            <person name="Daugherty S.C."/>
            <person name="Davidsen T.D."/>
            <person name="DeBoy R.T."/>
            <person name="Dimitrov G."/>
            <person name="Dodson R.J."/>
            <person name="Durkin A.S."/>
            <person name="Gwinn M.L."/>
            <person name="Haft D.H."/>
            <person name="Khouri H.M."/>
            <person name="Kolonay J.F."/>
            <person name="Madupu R."/>
            <person name="Mohammoud Y."/>
            <person name="Nelson W.C."/>
            <person name="Radune D."/>
            <person name="Romero C.M."/>
            <person name="Sarria S."/>
            <person name="Selengut J."/>
            <person name="Shamblin C."/>
            <person name="Sullivan S.A."/>
            <person name="White O."/>
            <person name="Yu Y."/>
            <person name="Zafar N."/>
            <person name="Zhou L."/>
            <person name="Fraser C.M."/>
        </authorList>
    </citation>
    <scope>NUCLEOTIDE SEQUENCE [LARGE SCALE GENOMIC DNA]</scope>
    <source>
        <strain>ATCC 23344</strain>
    </source>
</reference>
<accession>Q62J39</accession>
<proteinExistence type="inferred from homology"/>
<name>ACCA_BURMA</name>
<gene>
    <name evidence="1" type="primary">accA</name>
    <name type="ordered locus">BMA1654</name>
</gene>
<sequence length="323" mass="35667">MKTTFLDFEQPIAELEAKIEELRFVQDDSAVDISEEIERLSKKSQQLTKDLYANLTPWQVSQIARHPQRPYTLDYVSELFTDFHELHGDRAFADDQSIVGGLARFNGHACMVIGHQKGRDTKERAARNFGMPRPEGYRKAERLMRVAEKFGLPIFTFVDTPGAYPGVGAEERGQSEAIGHNLYVMAELKTPIIATVIGEGGSGGALAIAVADTVMMLQFSTYSVISPEGCASILWKSAAKAPEAAEALGLTAHRLKALGLIDKIVNEPLGGAHRDPKGMAALLRRALGDSLRQFQGMSVDALRERRFERLMAYGKFKETTPRA</sequence>
<keyword id="KW-0067">ATP-binding</keyword>
<keyword id="KW-0963">Cytoplasm</keyword>
<keyword id="KW-0275">Fatty acid biosynthesis</keyword>
<keyword id="KW-0276">Fatty acid metabolism</keyword>
<keyword id="KW-0444">Lipid biosynthesis</keyword>
<keyword id="KW-0443">Lipid metabolism</keyword>
<keyword id="KW-0547">Nucleotide-binding</keyword>
<keyword id="KW-1185">Reference proteome</keyword>
<keyword id="KW-0808">Transferase</keyword>
<evidence type="ECO:0000255" key="1">
    <source>
        <dbReference type="HAMAP-Rule" id="MF_00823"/>
    </source>
</evidence>
<evidence type="ECO:0000255" key="2">
    <source>
        <dbReference type="PROSITE-ProRule" id="PRU01137"/>
    </source>
</evidence>
<protein>
    <recommendedName>
        <fullName evidence="1">Acetyl-coenzyme A carboxylase carboxyl transferase subunit alpha</fullName>
        <shortName evidence="1">ACCase subunit alpha</shortName>
        <shortName evidence="1">Acetyl-CoA carboxylase carboxyltransferase subunit alpha</shortName>
        <ecNumber evidence="1">2.1.3.15</ecNumber>
    </recommendedName>
</protein>